<comment type="function">
    <text evidence="1">Catalyzes the attachment of L-aspartate to tRNA(Asp) in a two-step reaction: L-aspartate is first activated by ATP to form Asp-AMP and then transferred to the acceptor end of tRNA(Asp).</text>
</comment>
<comment type="catalytic activity">
    <reaction evidence="1">
        <text>tRNA(Asp) + L-aspartate + ATP = L-aspartyl-tRNA(Asp) + AMP + diphosphate</text>
        <dbReference type="Rhea" id="RHEA:19649"/>
        <dbReference type="Rhea" id="RHEA-COMP:9660"/>
        <dbReference type="Rhea" id="RHEA-COMP:9678"/>
        <dbReference type="ChEBI" id="CHEBI:29991"/>
        <dbReference type="ChEBI" id="CHEBI:30616"/>
        <dbReference type="ChEBI" id="CHEBI:33019"/>
        <dbReference type="ChEBI" id="CHEBI:78442"/>
        <dbReference type="ChEBI" id="CHEBI:78516"/>
        <dbReference type="ChEBI" id="CHEBI:456215"/>
        <dbReference type="EC" id="6.1.1.12"/>
    </reaction>
</comment>
<comment type="subunit">
    <text evidence="1">Homodimer.</text>
</comment>
<comment type="subcellular location">
    <subcellularLocation>
        <location evidence="1">Cytoplasm</location>
    </subcellularLocation>
</comment>
<comment type="similarity">
    <text evidence="1">Belongs to the class-II aminoacyl-tRNA synthetase family. Type 1 subfamily.</text>
</comment>
<protein>
    <recommendedName>
        <fullName evidence="1">Aspartate--tRNA ligase</fullName>
        <ecNumber evidence="1">6.1.1.12</ecNumber>
    </recommendedName>
    <alternativeName>
        <fullName evidence="1">Aspartyl-tRNA synthetase</fullName>
        <shortName evidence="1">AspRS</shortName>
    </alternativeName>
</protein>
<gene>
    <name evidence="1" type="primary">aspS</name>
    <name type="ordered locus">EcolC_1766</name>
</gene>
<proteinExistence type="inferred from homology"/>
<evidence type="ECO:0000255" key="1">
    <source>
        <dbReference type="HAMAP-Rule" id="MF_00044"/>
    </source>
</evidence>
<dbReference type="EC" id="6.1.1.12" evidence="1"/>
<dbReference type="EMBL" id="CP000946">
    <property type="protein sequence ID" value="ACA77416.1"/>
    <property type="molecule type" value="Genomic_DNA"/>
</dbReference>
<dbReference type="RefSeq" id="WP_001258662.1">
    <property type="nucleotide sequence ID" value="NZ_MTFT01000011.1"/>
</dbReference>
<dbReference type="SMR" id="B1J0M2"/>
<dbReference type="GeneID" id="75202728"/>
<dbReference type="KEGG" id="ecl:EcolC_1766"/>
<dbReference type="HOGENOM" id="CLU_014330_3_2_6"/>
<dbReference type="GO" id="GO:0005737">
    <property type="term" value="C:cytoplasm"/>
    <property type="evidence" value="ECO:0007669"/>
    <property type="project" value="UniProtKB-SubCell"/>
</dbReference>
<dbReference type="GO" id="GO:0004815">
    <property type="term" value="F:aspartate-tRNA ligase activity"/>
    <property type="evidence" value="ECO:0007669"/>
    <property type="project" value="UniProtKB-UniRule"/>
</dbReference>
<dbReference type="GO" id="GO:0005524">
    <property type="term" value="F:ATP binding"/>
    <property type="evidence" value="ECO:0007669"/>
    <property type="project" value="UniProtKB-UniRule"/>
</dbReference>
<dbReference type="GO" id="GO:0003676">
    <property type="term" value="F:nucleic acid binding"/>
    <property type="evidence" value="ECO:0007669"/>
    <property type="project" value="InterPro"/>
</dbReference>
<dbReference type="GO" id="GO:0006422">
    <property type="term" value="P:aspartyl-tRNA aminoacylation"/>
    <property type="evidence" value="ECO:0007669"/>
    <property type="project" value="UniProtKB-UniRule"/>
</dbReference>
<dbReference type="CDD" id="cd00777">
    <property type="entry name" value="AspRS_core"/>
    <property type="match status" value="1"/>
</dbReference>
<dbReference type="CDD" id="cd04317">
    <property type="entry name" value="EcAspRS_like_N"/>
    <property type="match status" value="1"/>
</dbReference>
<dbReference type="FunFam" id="2.40.50.140:FF:000080">
    <property type="entry name" value="Aspartate--tRNA ligase"/>
    <property type="match status" value="1"/>
</dbReference>
<dbReference type="FunFam" id="3.30.1360.30:FF:000001">
    <property type="entry name" value="Aspartate--tRNA ligase"/>
    <property type="match status" value="1"/>
</dbReference>
<dbReference type="Gene3D" id="3.30.930.10">
    <property type="entry name" value="Bira Bifunctional Protein, Domain 2"/>
    <property type="match status" value="1"/>
</dbReference>
<dbReference type="Gene3D" id="3.30.1360.30">
    <property type="entry name" value="GAD-like domain"/>
    <property type="match status" value="1"/>
</dbReference>
<dbReference type="Gene3D" id="2.40.50.140">
    <property type="entry name" value="Nucleic acid-binding proteins"/>
    <property type="match status" value="1"/>
</dbReference>
<dbReference type="HAMAP" id="MF_00044">
    <property type="entry name" value="Asp_tRNA_synth_type1"/>
    <property type="match status" value="1"/>
</dbReference>
<dbReference type="InterPro" id="IPR004364">
    <property type="entry name" value="Aa-tRNA-synt_II"/>
</dbReference>
<dbReference type="InterPro" id="IPR006195">
    <property type="entry name" value="aa-tRNA-synth_II"/>
</dbReference>
<dbReference type="InterPro" id="IPR045864">
    <property type="entry name" value="aa-tRNA-synth_II/BPL/LPL"/>
</dbReference>
<dbReference type="InterPro" id="IPR004524">
    <property type="entry name" value="Asp-tRNA-ligase_1"/>
</dbReference>
<dbReference type="InterPro" id="IPR047089">
    <property type="entry name" value="Asp-tRNA-ligase_1_N"/>
</dbReference>
<dbReference type="InterPro" id="IPR002312">
    <property type="entry name" value="Asp/Asn-tRNA-synth_IIb"/>
</dbReference>
<dbReference type="InterPro" id="IPR047090">
    <property type="entry name" value="AspRS_core"/>
</dbReference>
<dbReference type="InterPro" id="IPR004115">
    <property type="entry name" value="GAD-like_sf"/>
</dbReference>
<dbReference type="InterPro" id="IPR029351">
    <property type="entry name" value="GAD_dom"/>
</dbReference>
<dbReference type="InterPro" id="IPR012340">
    <property type="entry name" value="NA-bd_OB-fold"/>
</dbReference>
<dbReference type="InterPro" id="IPR004365">
    <property type="entry name" value="NA-bd_OB_tRNA"/>
</dbReference>
<dbReference type="NCBIfam" id="TIGR00459">
    <property type="entry name" value="aspS_bact"/>
    <property type="match status" value="1"/>
</dbReference>
<dbReference type="NCBIfam" id="NF001750">
    <property type="entry name" value="PRK00476.1"/>
    <property type="match status" value="1"/>
</dbReference>
<dbReference type="PANTHER" id="PTHR22594:SF5">
    <property type="entry name" value="ASPARTATE--TRNA LIGASE, MITOCHONDRIAL"/>
    <property type="match status" value="1"/>
</dbReference>
<dbReference type="PANTHER" id="PTHR22594">
    <property type="entry name" value="ASPARTYL/LYSYL-TRNA SYNTHETASE"/>
    <property type="match status" value="1"/>
</dbReference>
<dbReference type="Pfam" id="PF02938">
    <property type="entry name" value="GAD"/>
    <property type="match status" value="1"/>
</dbReference>
<dbReference type="Pfam" id="PF00152">
    <property type="entry name" value="tRNA-synt_2"/>
    <property type="match status" value="1"/>
</dbReference>
<dbReference type="Pfam" id="PF01336">
    <property type="entry name" value="tRNA_anti-codon"/>
    <property type="match status" value="1"/>
</dbReference>
<dbReference type="PRINTS" id="PR01042">
    <property type="entry name" value="TRNASYNTHASP"/>
</dbReference>
<dbReference type="SUPFAM" id="SSF55681">
    <property type="entry name" value="Class II aaRS and biotin synthetases"/>
    <property type="match status" value="1"/>
</dbReference>
<dbReference type="SUPFAM" id="SSF55261">
    <property type="entry name" value="GAD domain-like"/>
    <property type="match status" value="1"/>
</dbReference>
<dbReference type="SUPFAM" id="SSF50249">
    <property type="entry name" value="Nucleic acid-binding proteins"/>
    <property type="match status" value="1"/>
</dbReference>
<dbReference type="PROSITE" id="PS50862">
    <property type="entry name" value="AA_TRNA_LIGASE_II"/>
    <property type="match status" value="1"/>
</dbReference>
<reference key="1">
    <citation type="submission" date="2008-02" db="EMBL/GenBank/DDBJ databases">
        <title>Complete sequence of Escherichia coli C str. ATCC 8739.</title>
        <authorList>
            <person name="Copeland A."/>
            <person name="Lucas S."/>
            <person name="Lapidus A."/>
            <person name="Glavina del Rio T."/>
            <person name="Dalin E."/>
            <person name="Tice H."/>
            <person name="Bruce D."/>
            <person name="Goodwin L."/>
            <person name="Pitluck S."/>
            <person name="Kiss H."/>
            <person name="Brettin T."/>
            <person name="Detter J.C."/>
            <person name="Han C."/>
            <person name="Kuske C.R."/>
            <person name="Schmutz J."/>
            <person name="Larimer F."/>
            <person name="Land M."/>
            <person name="Hauser L."/>
            <person name="Kyrpides N."/>
            <person name="Mikhailova N."/>
            <person name="Ingram L."/>
            <person name="Richardson P."/>
        </authorList>
    </citation>
    <scope>NUCLEOTIDE SEQUENCE [LARGE SCALE GENOMIC DNA]</scope>
    <source>
        <strain>ATCC 8739 / DSM 1576 / NBRC 3972 / NCIMB 8545 / WDCM 00012 / Crooks</strain>
    </source>
</reference>
<keyword id="KW-0030">Aminoacyl-tRNA synthetase</keyword>
<keyword id="KW-0067">ATP-binding</keyword>
<keyword id="KW-0963">Cytoplasm</keyword>
<keyword id="KW-0436">Ligase</keyword>
<keyword id="KW-0547">Nucleotide-binding</keyword>
<keyword id="KW-0648">Protein biosynthesis</keyword>
<feature type="chain" id="PRO_1000074702" description="Aspartate--tRNA ligase">
    <location>
        <begin position="1"/>
        <end position="590"/>
    </location>
</feature>
<feature type="region of interest" description="Aspartate" evidence="1">
    <location>
        <begin position="195"/>
        <end position="198"/>
    </location>
</feature>
<feature type="binding site" evidence="1">
    <location>
        <position position="171"/>
    </location>
    <ligand>
        <name>L-aspartate</name>
        <dbReference type="ChEBI" id="CHEBI:29991"/>
    </ligand>
</feature>
<feature type="binding site" evidence="1">
    <location>
        <begin position="217"/>
        <end position="219"/>
    </location>
    <ligand>
        <name>ATP</name>
        <dbReference type="ChEBI" id="CHEBI:30616"/>
    </ligand>
</feature>
<feature type="binding site" evidence="1">
    <location>
        <position position="217"/>
    </location>
    <ligand>
        <name>L-aspartate</name>
        <dbReference type="ChEBI" id="CHEBI:29991"/>
    </ligand>
</feature>
<feature type="binding site" evidence="1">
    <location>
        <position position="226"/>
    </location>
    <ligand>
        <name>ATP</name>
        <dbReference type="ChEBI" id="CHEBI:30616"/>
    </ligand>
</feature>
<feature type="binding site" evidence="1">
    <location>
        <position position="448"/>
    </location>
    <ligand>
        <name>L-aspartate</name>
        <dbReference type="ChEBI" id="CHEBI:29991"/>
    </ligand>
</feature>
<feature type="binding site" evidence="1">
    <location>
        <position position="482"/>
    </location>
    <ligand>
        <name>ATP</name>
        <dbReference type="ChEBI" id="CHEBI:30616"/>
    </ligand>
</feature>
<feature type="binding site" evidence="1">
    <location>
        <position position="489"/>
    </location>
    <ligand>
        <name>L-aspartate</name>
        <dbReference type="ChEBI" id="CHEBI:29991"/>
    </ligand>
</feature>
<feature type="binding site" evidence="1">
    <location>
        <begin position="534"/>
        <end position="537"/>
    </location>
    <ligand>
        <name>ATP</name>
        <dbReference type="ChEBI" id="CHEBI:30616"/>
    </ligand>
</feature>
<accession>B1J0M2</accession>
<sequence length="590" mass="65869">MRTEYCGQLRLSHVGQQVTLCGWVNRRRDLGSLIFIDMRDREGIVQVFFDPDRADALKLASELRNEFCIQVTGTVRARDEKNINRDMATGEIEVLASSLTIINRADVLPLDSNHVNTEEARLKYRYLDLRRPEMAQRLKTRAKITSLVRRFMDDHGFLDIETPMLTKATPEGARDYLVPSRVHKGKFYALPQSPQLFKQLLMMSGFDRYYQIVKCFRDEDLRADRQPEFTQIDVETSFMTAPQVREVMEALVRHLWLEVKGVDLGDFPVMTFAEAERRYGSDKPDLRNPMELTDVADLLKSVEFAVFAGPANDPKGRVAALRVPGGASLTRKQIDEYGNFVKIYGAKGLAYIKVNERAKGLEGINSPVAKFLNAEIIEAILDRTAAQDGDMIFFGADNKKIVADAMGALRLKVGKDLGLTDESKWAPLWVIDFPMFEDDGEGGLTAMHHPFTSPKDMTAAELKAAPENAVANAYDMVINGYEVGGGSVRIHNGDMQQTVFGILGINEEEQREKFGFLLDALKYGTPPHAGLAFGLDRLTMLLTGTDNIRDVIAFPKTTAAACLMTEAPSFANPTALAELSIQVVKKAENN</sequence>
<organism>
    <name type="scientific">Escherichia coli (strain ATCC 8739 / DSM 1576 / NBRC 3972 / NCIMB 8545 / WDCM 00012 / Crooks)</name>
    <dbReference type="NCBI Taxonomy" id="481805"/>
    <lineage>
        <taxon>Bacteria</taxon>
        <taxon>Pseudomonadati</taxon>
        <taxon>Pseudomonadota</taxon>
        <taxon>Gammaproteobacteria</taxon>
        <taxon>Enterobacterales</taxon>
        <taxon>Enterobacteriaceae</taxon>
        <taxon>Escherichia</taxon>
    </lineage>
</organism>
<name>SYD_ECOLC</name>